<organism>
    <name type="scientific">Ranunculus lingua</name>
    <name type="common">Greater spearwort</name>
    <dbReference type="NCBI Taxonomy" id="105186"/>
    <lineage>
        <taxon>Eukaryota</taxon>
        <taxon>Viridiplantae</taxon>
        <taxon>Streptophyta</taxon>
        <taxon>Embryophyta</taxon>
        <taxon>Tracheophyta</taxon>
        <taxon>Spermatophyta</taxon>
        <taxon>Magnoliopsida</taxon>
        <taxon>Ranunculales</taxon>
        <taxon>Ranunculaceae</taxon>
        <taxon>Ranunculoideae</taxon>
        <taxon>Ranunculeae</taxon>
        <taxon>Ranunculus</taxon>
    </lineage>
</organism>
<accession>Q507Q9</accession>
<feature type="chain" id="PRO_0000143671" description="Maturase K">
    <location>
        <begin position="1"/>
        <end position="508"/>
    </location>
</feature>
<keyword id="KW-0150">Chloroplast</keyword>
<keyword id="KW-0507">mRNA processing</keyword>
<keyword id="KW-0934">Plastid</keyword>
<keyword id="KW-0694">RNA-binding</keyword>
<keyword id="KW-0819">tRNA processing</keyword>
<proteinExistence type="inferred from homology"/>
<dbReference type="EMBL" id="AY954206">
    <property type="protein sequence ID" value="AAY21353.1"/>
    <property type="molecule type" value="Genomic_DNA"/>
</dbReference>
<dbReference type="GO" id="GO:0009507">
    <property type="term" value="C:chloroplast"/>
    <property type="evidence" value="ECO:0007669"/>
    <property type="project" value="UniProtKB-SubCell"/>
</dbReference>
<dbReference type="GO" id="GO:0003723">
    <property type="term" value="F:RNA binding"/>
    <property type="evidence" value="ECO:0007669"/>
    <property type="project" value="UniProtKB-KW"/>
</dbReference>
<dbReference type="GO" id="GO:0006397">
    <property type="term" value="P:mRNA processing"/>
    <property type="evidence" value="ECO:0007669"/>
    <property type="project" value="UniProtKB-KW"/>
</dbReference>
<dbReference type="GO" id="GO:0008380">
    <property type="term" value="P:RNA splicing"/>
    <property type="evidence" value="ECO:0007669"/>
    <property type="project" value="UniProtKB-UniRule"/>
</dbReference>
<dbReference type="GO" id="GO:0008033">
    <property type="term" value="P:tRNA processing"/>
    <property type="evidence" value="ECO:0007669"/>
    <property type="project" value="UniProtKB-KW"/>
</dbReference>
<dbReference type="HAMAP" id="MF_01390">
    <property type="entry name" value="MatK"/>
    <property type="match status" value="1"/>
</dbReference>
<dbReference type="InterPro" id="IPR024937">
    <property type="entry name" value="Domain_X"/>
</dbReference>
<dbReference type="InterPro" id="IPR002866">
    <property type="entry name" value="Maturase_MatK"/>
</dbReference>
<dbReference type="InterPro" id="IPR024942">
    <property type="entry name" value="Maturase_MatK_N"/>
</dbReference>
<dbReference type="PANTHER" id="PTHR34811">
    <property type="entry name" value="MATURASE K"/>
    <property type="match status" value="1"/>
</dbReference>
<dbReference type="PANTHER" id="PTHR34811:SF1">
    <property type="entry name" value="MATURASE K"/>
    <property type="match status" value="1"/>
</dbReference>
<dbReference type="Pfam" id="PF01348">
    <property type="entry name" value="Intron_maturas2"/>
    <property type="match status" value="1"/>
</dbReference>
<dbReference type="Pfam" id="PF01824">
    <property type="entry name" value="MatK_N"/>
    <property type="match status" value="1"/>
</dbReference>
<name>MATK_RANLI</name>
<geneLocation type="chloroplast"/>
<comment type="function">
    <text evidence="1">Usually encoded in the trnK tRNA gene intron. Probably assists in splicing its own and other chloroplast group II introns.</text>
</comment>
<comment type="subcellular location">
    <subcellularLocation>
        <location>Plastid</location>
        <location>Chloroplast</location>
    </subcellularLocation>
</comment>
<comment type="similarity">
    <text evidence="1">Belongs to the intron maturase 2 family. MatK subfamily.</text>
</comment>
<gene>
    <name evidence="1" type="primary">matK</name>
</gene>
<reference key="1">
    <citation type="journal article" date="2005" name="Taxon">
        <title>Phylogenetic relationships and biogeography of Ranunculus and allied genera (Ranunculaceae) in the Mediterranean region and in the European alpine system.</title>
        <authorList>
            <person name="Paun O."/>
            <person name="Lehnebach C."/>
            <person name="Johansson J.T."/>
            <person name="Lockhart P."/>
            <person name="Hoerandl E."/>
        </authorList>
    </citation>
    <scope>NUCLEOTIDE SEQUENCE [GENOMIC DNA]</scope>
</reference>
<protein>
    <recommendedName>
        <fullName evidence="1">Maturase K</fullName>
    </recommendedName>
    <alternativeName>
        <fullName evidence="1">Intron maturase</fullName>
    </alternativeName>
</protein>
<sequence>MEELQRYLKMDRSRERDFLYPLIFQEYIYVLAHDFGLTKSIPYESMQILSYDNKYSSLIVKRLIIRMYQQKHFLILDNDSNQKKFLGHNKNLYSQMISEGFAVIVEIPFALRLVSSYQGKEIKKSINLRSIHSTFPFLEDKFVHLNHVLDILIPYPIHLELLVQNLRCWIQDASFLHLLRFFLYEYHNWNSLTTQKTKQNSLFLKENRRFFLFLYNFHVYESESIFLFLRKKSYHLRSTSSIAFLDRRRFYGKIEHFKVVFHNDFHTILWLFKDPFMHYFRYQGKSIMSSKGTLLLMKKWKYYLVNLWECHFDFWSQPNRIHINQLSNRFLDFLGYLSGVRPNPSVVRNQMLENAFIIDIAINKLDTIVPIIPLIGSLAKAKFCNLSGQPVSKPAWTDSPDSDIMDRFGRICRNVSHYYSGSSKKKTLYRIKYIFRLSCARTLARKHKSTVRSFLKRLGSEFLEEFLIEEEEVLSFILPKISSSSQRLSKERIWYFDIIRINDLMDLS</sequence>
<evidence type="ECO:0000255" key="1">
    <source>
        <dbReference type="HAMAP-Rule" id="MF_01390"/>
    </source>
</evidence>